<proteinExistence type="evidence at protein level"/>
<reference key="1">
    <citation type="journal article" date="1992" name="Genes Dev.">
        <title>Pax-5 encodes the transcription factor BSAP and is expressed in B lymphocytes, the developing CNS, and adult testis.</title>
        <authorList>
            <person name="Adams B."/>
            <person name="Doerfler P."/>
            <person name="Aguzzi A."/>
            <person name="Kozmik Z."/>
            <person name="Urbanek P."/>
            <person name="Maurer-Fogy I."/>
            <person name="Busslinger M."/>
        </authorList>
    </citation>
    <scope>NUCLEOTIDE SEQUENCE [MRNA] (ISOFORM 1)</scope>
</reference>
<reference key="2">
    <citation type="journal article" date="2004" name="J. Biol. Chem.">
        <title>Human Pax-5 C-terminal isoforms possess distinct transactivation properties and are differentially modulated in normal and malignant B cells.</title>
        <authorList>
            <person name="Robichaud G.A."/>
            <person name="Nardini M."/>
            <person name="Laflamme M."/>
            <person name="Cuperlovic-Culf M."/>
            <person name="Ouellette R.J."/>
        </authorList>
    </citation>
    <scope>NUCLEOTIDE SEQUENCE [MRNA] (ISOFORMS 1; 2; 3; 4; 5 AND 6)</scope>
    <scope>ALTERNATIVE SPLICING</scope>
</reference>
<reference key="3">
    <citation type="journal article" date="2009" name="Br. J. Haematol.">
        <title>Multiple isoforms of PAX5 are expressed in both lymphomas and normal B-cells.</title>
        <authorList>
            <person name="Arseneau J.R."/>
            <person name="Laflamme M."/>
            <person name="Lewis S.M."/>
            <person name="Maicas E."/>
            <person name="Ouellette R.J."/>
        </authorList>
    </citation>
    <scope>NUCLEOTIDE SEQUENCE [MRNA] (ISOFORMS 7; 8; 9; 10 AND 11)</scope>
</reference>
<reference key="4">
    <citation type="submission" date="2006-10" db="EMBL/GenBank/DDBJ databases">
        <authorList>
            <person name="Livingston R.J."/>
            <person name="Shaffer T."/>
            <person name="McFarland I."/>
            <person name="Nguyen C.P."/>
            <person name="Stanaway I.B."/>
            <person name="Rajkumar N."/>
            <person name="Johnson E.J."/>
            <person name="da Ponte S.H."/>
            <person name="Willa H."/>
            <person name="Ahearn M.O."/>
            <person name="Bertucci C."/>
            <person name="Acklestad J."/>
            <person name="Carroll A."/>
            <person name="Swanson J."/>
            <person name="Gildersleeve H.I."/>
            <person name="Nickerson D.A."/>
        </authorList>
    </citation>
    <scope>NUCLEOTIDE SEQUENCE [GENOMIC DNA]</scope>
</reference>
<reference key="5">
    <citation type="journal article" date="2004" name="Nature">
        <title>DNA sequence and analysis of human chromosome 9.</title>
        <authorList>
            <person name="Humphray S.J."/>
            <person name="Oliver K."/>
            <person name="Hunt A.R."/>
            <person name="Plumb R.W."/>
            <person name="Loveland J.E."/>
            <person name="Howe K.L."/>
            <person name="Andrews T.D."/>
            <person name="Searle S."/>
            <person name="Hunt S.E."/>
            <person name="Scott C.E."/>
            <person name="Jones M.C."/>
            <person name="Ainscough R."/>
            <person name="Almeida J.P."/>
            <person name="Ambrose K.D."/>
            <person name="Ashwell R.I.S."/>
            <person name="Babbage A.K."/>
            <person name="Babbage S."/>
            <person name="Bagguley C.L."/>
            <person name="Bailey J."/>
            <person name="Banerjee R."/>
            <person name="Barker D.J."/>
            <person name="Barlow K.F."/>
            <person name="Bates K."/>
            <person name="Beasley H."/>
            <person name="Beasley O."/>
            <person name="Bird C.P."/>
            <person name="Bray-Allen S."/>
            <person name="Brown A.J."/>
            <person name="Brown J.Y."/>
            <person name="Burford D."/>
            <person name="Burrill W."/>
            <person name="Burton J."/>
            <person name="Carder C."/>
            <person name="Carter N.P."/>
            <person name="Chapman J.C."/>
            <person name="Chen Y."/>
            <person name="Clarke G."/>
            <person name="Clark S.Y."/>
            <person name="Clee C.M."/>
            <person name="Clegg S."/>
            <person name="Collier R.E."/>
            <person name="Corby N."/>
            <person name="Crosier M."/>
            <person name="Cummings A.T."/>
            <person name="Davies J."/>
            <person name="Dhami P."/>
            <person name="Dunn M."/>
            <person name="Dutta I."/>
            <person name="Dyer L.W."/>
            <person name="Earthrowl M.E."/>
            <person name="Faulkner L."/>
            <person name="Fleming C.J."/>
            <person name="Frankish A."/>
            <person name="Frankland J.A."/>
            <person name="French L."/>
            <person name="Fricker D.G."/>
            <person name="Garner P."/>
            <person name="Garnett J."/>
            <person name="Ghori J."/>
            <person name="Gilbert J.G.R."/>
            <person name="Glison C."/>
            <person name="Grafham D.V."/>
            <person name="Gribble S."/>
            <person name="Griffiths C."/>
            <person name="Griffiths-Jones S."/>
            <person name="Grocock R."/>
            <person name="Guy J."/>
            <person name="Hall R.E."/>
            <person name="Hammond S."/>
            <person name="Harley J.L."/>
            <person name="Harrison E.S.I."/>
            <person name="Hart E.A."/>
            <person name="Heath P.D."/>
            <person name="Henderson C.D."/>
            <person name="Hopkins B.L."/>
            <person name="Howard P.J."/>
            <person name="Howden P.J."/>
            <person name="Huckle E."/>
            <person name="Johnson C."/>
            <person name="Johnson D."/>
            <person name="Joy A.A."/>
            <person name="Kay M."/>
            <person name="Keenan S."/>
            <person name="Kershaw J.K."/>
            <person name="Kimberley A.M."/>
            <person name="King A."/>
            <person name="Knights A."/>
            <person name="Laird G.K."/>
            <person name="Langford C."/>
            <person name="Lawlor S."/>
            <person name="Leongamornlert D.A."/>
            <person name="Leversha M."/>
            <person name="Lloyd C."/>
            <person name="Lloyd D.M."/>
            <person name="Lovell J."/>
            <person name="Martin S."/>
            <person name="Mashreghi-Mohammadi M."/>
            <person name="Matthews L."/>
            <person name="McLaren S."/>
            <person name="McLay K.E."/>
            <person name="McMurray A."/>
            <person name="Milne S."/>
            <person name="Nickerson T."/>
            <person name="Nisbett J."/>
            <person name="Nordsiek G."/>
            <person name="Pearce A.V."/>
            <person name="Peck A.I."/>
            <person name="Porter K.M."/>
            <person name="Pandian R."/>
            <person name="Pelan S."/>
            <person name="Phillimore B."/>
            <person name="Povey S."/>
            <person name="Ramsey Y."/>
            <person name="Rand V."/>
            <person name="Scharfe M."/>
            <person name="Sehra H.K."/>
            <person name="Shownkeen R."/>
            <person name="Sims S.K."/>
            <person name="Skuce C.D."/>
            <person name="Smith M."/>
            <person name="Steward C.A."/>
            <person name="Swarbreck D."/>
            <person name="Sycamore N."/>
            <person name="Tester J."/>
            <person name="Thorpe A."/>
            <person name="Tracey A."/>
            <person name="Tromans A."/>
            <person name="Thomas D.W."/>
            <person name="Wall M."/>
            <person name="Wallis J.M."/>
            <person name="West A.P."/>
            <person name="Whitehead S.L."/>
            <person name="Willey D.L."/>
            <person name="Williams S.A."/>
            <person name="Wilming L."/>
            <person name="Wray P.W."/>
            <person name="Young L."/>
            <person name="Ashurst J.L."/>
            <person name="Coulson A."/>
            <person name="Blocker H."/>
            <person name="Durbin R.M."/>
            <person name="Sulston J.E."/>
            <person name="Hubbard T."/>
            <person name="Jackson M.J."/>
            <person name="Bentley D.R."/>
            <person name="Beck S."/>
            <person name="Rogers J."/>
            <person name="Dunham I."/>
        </authorList>
    </citation>
    <scope>NUCLEOTIDE SEQUENCE [LARGE SCALE GENOMIC DNA]</scope>
</reference>
<reference key="6">
    <citation type="submission" date="2005-09" db="EMBL/GenBank/DDBJ databases">
        <authorList>
            <person name="Mural R.J."/>
            <person name="Istrail S."/>
            <person name="Sutton G."/>
            <person name="Florea L."/>
            <person name="Halpern A.L."/>
            <person name="Mobarry C.M."/>
            <person name="Lippert R."/>
            <person name="Walenz B."/>
            <person name="Shatkay H."/>
            <person name="Dew I."/>
            <person name="Miller J.R."/>
            <person name="Flanigan M.J."/>
            <person name="Edwards N.J."/>
            <person name="Bolanos R."/>
            <person name="Fasulo D."/>
            <person name="Halldorsson B.V."/>
            <person name="Hannenhalli S."/>
            <person name="Turner R."/>
            <person name="Yooseph S."/>
            <person name="Lu F."/>
            <person name="Nusskern D.R."/>
            <person name="Shue B.C."/>
            <person name="Zheng X.H."/>
            <person name="Zhong F."/>
            <person name="Delcher A.L."/>
            <person name="Huson D.H."/>
            <person name="Kravitz S.A."/>
            <person name="Mouchard L."/>
            <person name="Reinert K."/>
            <person name="Remington K.A."/>
            <person name="Clark A.G."/>
            <person name="Waterman M.S."/>
            <person name="Eichler E.E."/>
            <person name="Adams M.D."/>
            <person name="Hunkapiller M.W."/>
            <person name="Myers E.W."/>
            <person name="Venter J.C."/>
        </authorList>
    </citation>
    <scope>NUCLEOTIDE SEQUENCE [LARGE SCALE GENOMIC DNA]</scope>
</reference>
<reference key="7">
    <citation type="journal article" date="2007" name="Nature">
        <title>Genome-wide analysis of genetic alterations in acute lymphoblastic leukaemia.</title>
        <authorList>
            <person name="Mullighan C.G."/>
            <person name="Goorha S."/>
            <person name="Radtke I."/>
            <person name="Miller C.B."/>
            <person name="Coustan-Smith E."/>
            <person name="Dalton J.D."/>
            <person name="Girtman K."/>
            <person name="Mathew S."/>
            <person name="Ma J."/>
            <person name="Pounds S.B."/>
            <person name="Su X."/>
            <person name="Pui C.-H."/>
            <person name="Relling M.V."/>
            <person name="Evans W.E."/>
            <person name="Shurtleff S.A."/>
            <person name="Downing J.R."/>
        </authorList>
    </citation>
    <scope>NUCLEOTIDE SEQUENCE [MRNA] OF 1-333 (ISOFORM 1)</scope>
    <scope>CHROMOSOMAL TRANSLOCATION WITH ZNF521</scope>
    <scope>CHROMOSOMAL TRANSLOCATION WITH FOXP1</scope>
    <scope>CHROMOSOMAL TRANSLOCATION WITH ETV6</scope>
</reference>
<reference key="8">
    <citation type="journal article" date="1998" name="Nucleic Acids Res.">
        <title>Isolation of genes negatively or positively co-expressed with human recombination activating gene 1 (RAG1) by differential display PCR (DD RT-PCR).</title>
        <authorList>
            <person name="Verkoczy L.K."/>
            <person name="Berinstein N.L."/>
        </authorList>
    </citation>
    <scope>NUCLEOTIDE SEQUENCE [MRNA] OF 62-197</scope>
</reference>
<reference key="9">
    <citation type="journal article" date="1999" name="Cancer Res.">
        <title>The partial homeodomain of the transcription factor Pax-5 (BSAP) is an interaction motif for the retinoblastoma and TATA-binding proteins.</title>
        <authorList>
            <person name="Eberhard D."/>
            <person name="Busslinger M."/>
        </authorList>
    </citation>
    <scope>INTERACTION WITH TBP AND RB1</scope>
</reference>
<reference key="10">
    <citation type="journal article" date="2000" name="EMBO J.">
        <title>Transcriptional repression by Pax5 (BSAP) through interaction with corepressors of the Groucho family.</title>
        <authorList>
            <person name="Eberhard D."/>
            <person name="Jimenez G."/>
            <person name="Heavey B."/>
            <person name="Busslinger M."/>
        </authorList>
    </citation>
    <scope>INTERACTION WITH TLE4</scope>
    <scope>FUNCTION</scope>
</reference>
<reference key="11">
    <citation type="journal article" date="2013" name="J. Virol.">
        <title>The B-cell-specific transcription factor and master regulator Pax5 promotes Epstein-Barr virus latency by negatively regulating the viral immediate early protein BZLF1.</title>
        <authorList>
            <person name="Raver R.M."/>
            <person name="Panfil A.R."/>
            <person name="Hagemeier S.R."/>
            <person name="Kenney S.C."/>
        </authorList>
    </citation>
    <scope>FUNCTION (MICROBIAL INFECTION)</scope>
    <scope>INTERACTION WITH EPSTEIN-BARR VIRUS PROTEIN BZLF1 (MICROBIAL INFECTION)</scope>
</reference>
<reference key="12">
    <citation type="journal article" date="2016" name="Biochem. Biophys. Res. Commun.">
        <title>PAX5 tyrosine phosphorylation by SYK co-operatively functions with its serine phosphorylation to cancel the PAX5-dependent repression of BLIMP1: A mechanism for antigen-triggered plasma cell differentiation.</title>
        <authorList>
            <person name="Inagaki Y."/>
            <person name="Hayakawa F."/>
            <person name="Hirano D."/>
            <person name="Kojima Y."/>
            <person name="Morishita T."/>
            <person name="Yasuda T."/>
            <person name="Naoe T."/>
            <person name="Kiyoi H."/>
        </authorList>
    </citation>
    <scope>FUNCTION</scope>
    <scope>PHOSPHORYLATION</scope>
</reference>
<reference key="13">
    <citation type="journal article" date="2020" name="J. Virol.">
        <title>B Cell-Specific Transcription Activator PAX5 Recruits p300 To Support EBNA1-Driven Transcription.</title>
        <authorList>
            <person name="Liu C.D."/>
            <person name="Lee H.L."/>
            <person name="Peng C.W."/>
        </authorList>
    </citation>
    <scope>FUNCTION (MICROBIAL INFECTION)</scope>
    <scope>INTERACTION WITH EPSTEIN-BARR VIRUS PROTEIN EBNA1 (MICROBIAL INFECTION)</scope>
    <scope>SUBCELLULAR LOCATION</scope>
</reference>
<reference key="14">
    <citation type="journal article" date="2020" name="Nature">
        <title>Wapl repression by Pax5 promotes V gene recombination by Igh loop extrusion.</title>
        <authorList>
            <person name="Hill L."/>
            <person name="Ebert A."/>
            <person name="Jaritz M."/>
            <person name="Wutz G."/>
            <person name="Nagasaka K."/>
            <person name="Tagoh H."/>
            <person name="Kostanova-Poliakova D."/>
            <person name="Schindler K."/>
            <person name="Sun Q."/>
            <person name="Boenelt P."/>
            <person name="Fischer M."/>
            <person name="Peters J.M."/>
            <person name="Busslinger M."/>
        </authorList>
    </citation>
    <scope>FUNCTION</scope>
</reference>
<reference key="15">
    <citation type="journal article" date="2001" name="Mol. Cell">
        <title>Structural studies of Ets-1/Pax5 complex formation on DNA.</title>
        <authorList>
            <person name="Garvie C.W."/>
            <person name="Hagman J."/>
            <person name="Wolberger C."/>
        </authorList>
    </citation>
    <scope>X-RAY CRYSTALLOGRAPHY (2.25 ANGSTROMS) OF 1-149 IN COMPLEX WITH MOUSE ETS1 AND DNA</scope>
</reference>
<reference key="16">
    <citation type="journal article" date="2013" name="Nat. Genet.">
        <title>A recurrent germline PAX5 mutation confers susceptibility to pre-B cell acute lymphoblastic leukemia.</title>
        <authorList>
            <person name="Shah S."/>
            <person name="Schrader K.A."/>
            <person name="Waanders E."/>
            <person name="Timms A.E."/>
            <person name="Vijai J."/>
            <person name="Miething C."/>
            <person name="Wechsler J."/>
            <person name="Yang J."/>
            <person name="Hayes J."/>
            <person name="Klein R.J."/>
            <person name="Zhang J."/>
            <person name="Wei L."/>
            <person name="Wu G."/>
            <person name="Rusch M."/>
            <person name="Nagahawatte P."/>
            <person name="Ma J."/>
            <person name="Chen S.C."/>
            <person name="Song G."/>
            <person name="Cheng J."/>
            <person name="Meyers P."/>
            <person name="Bhojwani D."/>
            <person name="Jhanwar S."/>
            <person name="Maslak P."/>
            <person name="Fleisher M."/>
            <person name="Littman J."/>
            <person name="Offit L."/>
            <person name="Rau-Murthy R."/>
            <person name="Fleischut M.H."/>
            <person name="Corines M."/>
            <person name="Murali R."/>
            <person name="Gao X."/>
            <person name="Manschreck C."/>
            <person name="Kitzing T."/>
            <person name="Murty V.V."/>
            <person name="Raimondi S.C."/>
            <person name="Kuiper R.P."/>
            <person name="Simons A."/>
            <person name="Schiffman J.D."/>
            <person name="Onel K."/>
            <person name="Plon S.E."/>
            <person name="Wheeler D.A."/>
            <person name="Ritter D."/>
            <person name="Ziegler D.S."/>
            <person name="Tucker K."/>
            <person name="Sutton R."/>
            <person name="Chenevix-Trench G."/>
            <person name="Li J."/>
            <person name="Huntsman D.G."/>
            <person name="Hansford S."/>
            <person name="Senz J."/>
            <person name="Walsh T."/>
            <person name="Lee M."/>
            <person name="Hahn C.N."/>
            <person name="Roberts K.G."/>
            <person name="King M.C."/>
            <person name="Lo S.M."/>
            <person name="Levine R.L."/>
            <person name="Viale A."/>
            <person name="Socci N.D."/>
            <person name="Nathanson K.L."/>
            <person name="Scott H.S."/>
            <person name="Daly M."/>
            <person name="Lipkin S.M."/>
            <person name="Lowe S.W."/>
            <person name="Downing J.R."/>
            <person name="Altshuler D."/>
            <person name="Sandlund J.T."/>
            <person name="Horwitz M.S."/>
            <person name="Mullighan C.G."/>
            <person name="Offit K."/>
        </authorList>
    </citation>
    <scope>VARIANT ALL3 SER-183</scope>
    <scope>VARIANTS ARG-24; GLY-26; GLN-34; VAL-53; GLY-59; ASN-66; ARG-75; ARG-80; THR-139; ILE-151; VAL-183; LEU-213; THR-301 AND VAL-338</scope>
    <scope>CHARACTERIZATION OF VARIANT ALL3 SER-183</scope>
</reference>
<keyword id="KW-0002">3D-structure</keyword>
<keyword id="KW-0025">Alternative splicing</keyword>
<keyword id="KW-0160">Chromosomal rearrangement</keyword>
<keyword id="KW-0217">Developmental protein</keyword>
<keyword id="KW-0221">Differentiation</keyword>
<keyword id="KW-0225">Disease variant</keyword>
<keyword id="KW-0238">DNA-binding</keyword>
<keyword id="KW-0325">Glycoprotein</keyword>
<keyword id="KW-0524">Neurogenesis</keyword>
<keyword id="KW-0539">Nucleus</keyword>
<keyword id="KW-0563">Paired box</keyword>
<keyword id="KW-1267">Proteomics identification</keyword>
<keyword id="KW-0656">Proto-oncogene</keyword>
<keyword id="KW-1185">Reference proteome</keyword>
<keyword id="KW-0744">Spermatogenesis</keyword>
<keyword id="KW-0804">Transcription</keyword>
<keyword id="KW-0805">Transcription regulation</keyword>
<name>PAX5_HUMAN</name>
<accession>Q02548</accession>
<accession>A3QVP6</accession>
<accession>A3QVP7</accession>
<accession>A3QVP8</accession>
<accession>C0KTF6</accession>
<accession>C0KTF7</accession>
<accession>C0KTF8</accession>
<accession>C0KTF9</accession>
<accession>C0KTG0</accession>
<accession>O75933</accession>
<accession>Q5SFM2</accession>
<accession>Q6S728</accession>
<accession>Q6S729</accession>
<accession>Q6S730</accession>
<accession>Q6S731</accession>
<accession>Q6S732</accession>
<protein>
    <recommendedName>
        <fullName>Paired box protein Pax-5</fullName>
    </recommendedName>
    <alternativeName>
        <fullName>B-cell-specific transcription factor</fullName>
        <shortName>BSAP</shortName>
    </alternativeName>
</protein>
<dbReference type="EMBL" id="M96944">
    <property type="protein sequence ID" value="AAA58397.1"/>
    <property type="molecule type" value="mRNA"/>
</dbReference>
<dbReference type="EMBL" id="AY463952">
    <property type="protein sequence ID" value="AAR27590.1"/>
    <property type="molecule type" value="mRNA"/>
</dbReference>
<dbReference type="EMBL" id="AY463953">
    <property type="protein sequence ID" value="AAR27591.1"/>
    <property type="molecule type" value="mRNA"/>
</dbReference>
<dbReference type="EMBL" id="AY463954">
    <property type="protein sequence ID" value="AAR27592.1"/>
    <property type="molecule type" value="mRNA"/>
</dbReference>
<dbReference type="EMBL" id="AY463955">
    <property type="protein sequence ID" value="AAR27593.1"/>
    <property type="molecule type" value="mRNA"/>
</dbReference>
<dbReference type="EMBL" id="AY463956">
    <property type="protein sequence ID" value="AAR27594.1"/>
    <property type="molecule type" value="mRNA"/>
</dbReference>
<dbReference type="EMBL" id="AY463957">
    <property type="protein sequence ID" value="AAR27595.1"/>
    <property type="molecule type" value="mRNA"/>
</dbReference>
<dbReference type="EMBL" id="FJ626421">
    <property type="protein sequence ID" value="ACM91604.1"/>
    <property type="molecule type" value="mRNA"/>
</dbReference>
<dbReference type="EMBL" id="FJ626422">
    <property type="protein sequence ID" value="ACM91605.1"/>
    <property type="molecule type" value="mRNA"/>
</dbReference>
<dbReference type="EMBL" id="FJ626423">
    <property type="protein sequence ID" value="ACM91606.1"/>
    <property type="molecule type" value="mRNA"/>
</dbReference>
<dbReference type="EMBL" id="FJ626424">
    <property type="protein sequence ID" value="ACM91607.1"/>
    <property type="molecule type" value="mRNA"/>
</dbReference>
<dbReference type="EMBL" id="FJ626425">
    <property type="protein sequence ID" value="ACM91608.1"/>
    <property type="molecule type" value="mRNA"/>
</dbReference>
<dbReference type="EMBL" id="EF064717">
    <property type="protein sequence ID" value="ABK41900.1"/>
    <property type="molecule type" value="Genomic_DNA"/>
</dbReference>
<dbReference type="EMBL" id="AL161781">
    <property type="status" value="NOT_ANNOTATED_CDS"/>
    <property type="molecule type" value="Genomic_DNA"/>
</dbReference>
<dbReference type="EMBL" id="AL450267">
    <property type="status" value="NOT_ANNOTATED_CDS"/>
    <property type="molecule type" value="Genomic_DNA"/>
</dbReference>
<dbReference type="EMBL" id="CH471071">
    <property type="protein sequence ID" value="EAW58294.1"/>
    <property type="molecule type" value="Genomic_DNA"/>
</dbReference>
<dbReference type="EMBL" id="CH471071">
    <property type="protein sequence ID" value="EAW58295.1"/>
    <property type="molecule type" value="Genomic_DNA"/>
</dbReference>
<dbReference type="EMBL" id="CH471071">
    <property type="protein sequence ID" value="EAW58296.1"/>
    <property type="molecule type" value="Genomic_DNA"/>
</dbReference>
<dbReference type="EMBL" id="CH471071">
    <property type="protein sequence ID" value="EAW58297.1"/>
    <property type="molecule type" value="Genomic_DNA"/>
</dbReference>
<dbReference type="EMBL" id="CH471071">
    <property type="protein sequence ID" value="EAW58298.1"/>
    <property type="molecule type" value="Genomic_DNA"/>
</dbReference>
<dbReference type="EMBL" id="CH471071">
    <property type="protein sequence ID" value="EAW58299.1"/>
    <property type="molecule type" value="Genomic_DNA"/>
</dbReference>
<dbReference type="EMBL" id="DQ841178">
    <property type="protein sequence ID" value="ABI30005.1"/>
    <property type="status" value="ALT_TERM"/>
    <property type="molecule type" value="mRNA"/>
</dbReference>
<dbReference type="EMBL" id="DQ845345">
    <property type="protein sequence ID" value="ABI33104.1"/>
    <property type="status" value="ALT_TERM"/>
    <property type="molecule type" value="mRNA"/>
</dbReference>
<dbReference type="EMBL" id="DQ845346">
    <property type="protein sequence ID" value="ABI33105.1"/>
    <property type="status" value="ALT_TERM"/>
    <property type="molecule type" value="mRNA"/>
</dbReference>
<dbReference type="EMBL" id="AF080573">
    <property type="protein sequence ID" value="AAC35286.1"/>
    <property type="molecule type" value="mRNA"/>
</dbReference>
<dbReference type="CCDS" id="CCDS65041.1">
    <molecule id="Q02548-10"/>
</dbReference>
<dbReference type="CCDS" id="CCDS65042.1">
    <molecule id="Q02548-9"/>
</dbReference>
<dbReference type="CCDS" id="CCDS65043.1">
    <molecule id="Q02548-8"/>
</dbReference>
<dbReference type="CCDS" id="CCDS65044.1">
    <molecule id="Q02548-4"/>
</dbReference>
<dbReference type="CCDS" id="CCDS65045.1">
    <molecule id="Q02548-3"/>
</dbReference>
<dbReference type="CCDS" id="CCDS65046.1">
    <molecule id="Q02548-7"/>
</dbReference>
<dbReference type="CCDS" id="CCDS65047.1">
    <molecule id="Q02548-6"/>
</dbReference>
<dbReference type="CCDS" id="CCDS65048.1">
    <molecule id="Q02548-2"/>
</dbReference>
<dbReference type="CCDS" id="CCDS6607.1">
    <molecule id="Q02548-1"/>
</dbReference>
<dbReference type="PIR" id="A44063">
    <property type="entry name" value="A44063"/>
</dbReference>
<dbReference type="RefSeq" id="NP_001267476.1">
    <molecule id="Q02548-6"/>
    <property type="nucleotide sequence ID" value="NM_001280547.2"/>
</dbReference>
<dbReference type="RefSeq" id="NP_001267477.1">
    <molecule id="Q02548-2"/>
    <property type="nucleotide sequence ID" value="NM_001280548.2"/>
</dbReference>
<dbReference type="RefSeq" id="NP_001267478.1">
    <property type="nucleotide sequence ID" value="NM_001280549.1"/>
</dbReference>
<dbReference type="RefSeq" id="NP_001267479.1">
    <property type="nucleotide sequence ID" value="NM_001280550.1"/>
</dbReference>
<dbReference type="RefSeq" id="NP_001267481.1">
    <molecule id="Q02548-7"/>
    <property type="nucleotide sequence ID" value="NM_001280552.2"/>
</dbReference>
<dbReference type="RefSeq" id="NP_001267482.1">
    <molecule id="Q02548-9"/>
    <property type="nucleotide sequence ID" value="NM_001280553.2"/>
</dbReference>
<dbReference type="RefSeq" id="NP_001267483.1">
    <molecule id="Q02548-8"/>
    <property type="nucleotide sequence ID" value="NM_001280554.2"/>
</dbReference>
<dbReference type="RefSeq" id="NP_001267484.1">
    <molecule id="Q02548-10"/>
    <property type="nucleotide sequence ID" value="NM_001280555.2"/>
</dbReference>
<dbReference type="RefSeq" id="NP_001267485.1">
    <property type="nucleotide sequence ID" value="NM_001280556.1"/>
</dbReference>
<dbReference type="RefSeq" id="NP_057953.1">
    <molecule id="Q02548-1"/>
    <property type="nucleotide sequence ID" value="NM_016734.3"/>
</dbReference>
<dbReference type="PDB" id="1K78">
    <property type="method" value="X-ray"/>
    <property type="resolution" value="2.25 A"/>
    <property type="chains" value="A/E/I=1-149"/>
</dbReference>
<dbReference type="PDB" id="1MDM">
    <property type="method" value="X-ray"/>
    <property type="resolution" value="2.80 A"/>
    <property type="chains" value="A=1-149"/>
</dbReference>
<dbReference type="PDBsum" id="1K78"/>
<dbReference type="PDBsum" id="1MDM"/>
<dbReference type="SMR" id="Q02548"/>
<dbReference type="BioGRID" id="111113">
    <property type="interactions" value="60"/>
</dbReference>
<dbReference type="ELM" id="Q02548"/>
<dbReference type="FunCoup" id="Q02548">
    <property type="interactions" value="1380"/>
</dbReference>
<dbReference type="IntAct" id="Q02548">
    <property type="interactions" value="45"/>
</dbReference>
<dbReference type="STRING" id="9606.ENSP00000350844"/>
<dbReference type="GlyGen" id="Q02548">
    <property type="glycosylation" value="1 site"/>
</dbReference>
<dbReference type="iPTMnet" id="Q02548"/>
<dbReference type="PhosphoSitePlus" id="Q02548"/>
<dbReference type="BioMuta" id="PAX5"/>
<dbReference type="DMDM" id="417449"/>
<dbReference type="MassIVE" id="Q02548"/>
<dbReference type="PaxDb" id="9606-ENSP00000350844"/>
<dbReference type="PeptideAtlas" id="Q02548"/>
<dbReference type="ProteomicsDB" id="58109">
    <molecule id="Q02548-1"/>
</dbReference>
<dbReference type="ProteomicsDB" id="67344"/>
<dbReference type="ProteomicsDB" id="67345"/>
<dbReference type="ProteomicsDB" id="67346"/>
<dbReference type="ProteomicsDB" id="7578"/>
<dbReference type="ProteomicsDB" id="7579"/>
<dbReference type="ProteomicsDB" id="7580"/>
<dbReference type="ProteomicsDB" id="7581"/>
<dbReference type="ProteomicsDB" id="7582"/>
<dbReference type="Antibodypedia" id="3668">
    <property type="antibodies" value="1039 antibodies from 48 providers"/>
</dbReference>
<dbReference type="DNASU" id="5079"/>
<dbReference type="Ensembl" id="ENST00000358127.9">
    <molecule id="Q02548-1"/>
    <property type="protein sequence ID" value="ENSP00000350844.4"/>
    <property type="gene ID" value="ENSG00000196092.14"/>
</dbReference>
<dbReference type="Ensembl" id="ENST00000377840.6">
    <molecule id="Q02548-5"/>
    <property type="protein sequence ID" value="ENSP00000367071.2"/>
    <property type="gene ID" value="ENSG00000196092.14"/>
</dbReference>
<dbReference type="Ensembl" id="ENST00000377847.6">
    <molecule id="Q02548-7"/>
    <property type="protein sequence ID" value="ENSP00000367078.2"/>
    <property type="gene ID" value="ENSG00000196092.14"/>
</dbReference>
<dbReference type="Ensembl" id="ENST00000377852.7">
    <molecule id="Q02548-6"/>
    <property type="protein sequence ID" value="ENSP00000367083.2"/>
    <property type="gene ID" value="ENSG00000196092.14"/>
</dbReference>
<dbReference type="Ensembl" id="ENST00000377853.6">
    <molecule id="Q02548-2"/>
    <property type="protein sequence ID" value="ENSP00000367084.2"/>
    <property type="gene ID" value="ENSG00000196092.14"/>
</dbReference>
<dbReference type="Ensembl" id="ENST00000414447.5">
    <molecule id="Q02548-8"/>
    <property type="protein sequence ID" value="ENSP00000412188.1"/>
    <property type="gene ID" value="ENSG00000196092.14"/>
</dbReference>
<dbReference type="Ensembl" id="ENST00000446742.5">
    <molecule id="Q02548-10"/>
    <property type="protein sequence ID" value="ENSP00000404687.1"/>
    <property type="gene ID" value="ENSG00000196092.14"/>
</dbReference>
<dbReference type="Ensembl" id="ENST00000520281.5">
    <molecule id="Q02548-9"/>
    <property type="protein sequence ID" value="ENSP00000430773.1"/>
    <property type="gene ID" value="ENSG00000196092.14"/>
</dbReference>
<dbReference type="Ensembl" id="ENST00000523493.5">
    <molecule id="Q02548-11"/>
    <property type="protein sequence ID" value="ENSP00000431038.1"/>
    <property type="gene ID" value="ENSG00000196092.14"/>
</dbReference>
<dbReference type="GeneID" id="5079"/>
<dbReference type="KEGG" id="hsa:5079"/>
<dbReference type="MANE-Select" id="ENST00000358127.9">
    <property type="protein sequence ID" value="ENSP00000350844.4"/>
    <property type="RefSeq nucleotide sequence ID" value="NM_016734.3"/>
    <property type="RefSeq protein sequence ID" value="NP_057953.1"/>
</dbReference>
<dbReference type="UCSC" id="uc003zzo.3">
    <molecule id="Q02548-1"/>
    <property type="organism name" value="human"/>
</dbReference>
<dbReference type="AGR" id="HGNC:8619"/>
<dbReference type="CTD" id="5079"/>
<dbReference type="DisGeNET" id="5079"/>
<dbReference type="GeneCards" id="PAX5"/>
<dbReference type="HGNC" id="HGNC:8619">
    <property type="gene designation" value="PAX5"/>
</dbReference>
<dbReference type="HPA" id="ENSG00000196092">
    <property type="expression patterns" value="Tissue enriched (lymphoid)"/>
</dbReference>
<dbReference type="MalaCards" id="PAX5"/>
<dbReference type="MIM" id="167414">
    <property type="type" value="gene"/>
</dbReference>
<dbReference type="MIM" id="613065">
    <property type="type" value="phenotype"/>
</dbReference>
<dbReference type="neXtProt" id="NX_Q02548"/>
<dbReference type="OpenTargets" id="ENSG00000196092"/>
<dbReference type="Orphanet" id="641372">
    <property type="disease" value="B-lymphoblastic leukemia/lymphoma with t(7;9)(q11.2;p13.2)"/>
</dbReference>
<dbReference type="PharmGKB" id="PA32959"/>
<dbReference type="VEuPathDB" id="HostDB:ENSG00000196092"/>
<dbReference type="eggNOG" id="KOG3862">
    <property type="taxonomic scope" value="Eukaryota"/>
</dbReference>
<dbReference type="GeneTree" id="ENSGT00940000159636"/>
<dbReference type="HOGENOM" id="CLU_019281_1_3_1"/>
<dbReference type="InParanoid" id="Q02548"/>
<dbReference type="OMA" id="IXIQESP"/>
<dbReference type="OrthoDB" id="3225452at2759"/>
<dbReference type="PAN-GO" id="Q02548">
    <property type="GO annotations" value="4 GO annotations based on evolutionary models"/>
</dbReference>
<dbReference type="PhylomeDB" id="Q02548"/>
<dbReference type="TreeFam" id="TF315397"/>
<dbReference type="PathwayCommons" id="Q02548"/>
<dbReference type="Reactome" id="R-HSA-8939245">
    <property type="pathway name" value="RUNX1 regulates transcription of genes involved in BCR signaling"/>
</dbReference>
<dbReference type="SignaLink" id="Q02548"/>
<dbReference type="SIGNOR" id="Q02548"/>
<dbReference type="BioGRID-ORCS" id="5079">
    <property type="hits" value="27 hits in 1182 CRISPR screens"/>
</dbReference>
<dbReference type="ChiTaRS" id="PAX5">
    <property type="organism name" value="human"/>
</dbReference>
<dbReference type="EvolutionaryTrace" id="Q02548"/>
<dbReference type="GeneWiki" id="PAX5"/>
<dbReference type="GenomeRNAi" id="5079"/>
<dbReference type="Pharos" id="Q02548">
    <property type="development level" value="Tbio"/>
</dbReference>
<dbReference type="PRO" id="PR:Q02548"/>
<dbReference type="Proteomes" id="UP000005640">
    <property type="component" value="Chromosome 9"/>
</dbReference>
<dbReference type="RNAct" id="Q02548">
    <property type="molecule type" value="protein"/>
</dbReference>
<dbReference type="Bgee" id="ENSG00000196092">
    <property type="expression patterns" value="Expressed in buccal mucosa cell and 116 other cell types or tissues"/>
</dbReference>
<dbReference type="ExpressionAtlas" id="Q02548">
    <property type="expression patterns" value="baseline and differential"/>
</dbReference>
<dbReference type="GO" id="GO:0000785">
    <property type="term" value="C:chromatin"/>
    <property type="evidence" value="ECO:0000247"/>
    <property type="project" value="NTNU_SB"/>
</dbReference>
<dbReference type="GO" id="GO:0005654">
    <property type="term" value="C:nucleoplasm"/>
    <property type="evidence" value="ECO:0000314"/>
    <property type="project" value="HPA"/>
</dbReference>
<dbReference type="GO" id="GO:0001228">
    <property type="term" value="F:DNA-binding transcription activator activity, RNA polymerase II-specific"/>
    <property type="evidence" value="ECO:0007669"/>
    <property type="project" value="Ensembl"/>
</dbReference>
<dbReference type="GO" id="GO:0000981">
    <property type="term" value="F:DNA-binding transcription factor activity, RNA polymerase II-specific"/>
    <property type="evidence" value="ECO:0000247"/>
    <property type="project" value="NTNU_SB"/>
</dbReference>
<dbReference type="GO" id="GO:0000978">
    <property type="term" value="F:RNA polymerase II cis-regulatory region sequence-specific DNA binding"/>
    <property type="evidence" value="ECO:0000318"/>
    <property type="project" value="GO_Central"/>
</dbReference>
<dbReference type="GO" id="GO:0030534">
    <property type="term" value="P:adult behavior"/>
    <property type="evidence" value="ECO:0007669"/>
    <property type="project" value="Ensembl"/>
</dbReference>
<dbReference type="GO" id="GO:0030183">
    <property type="term" value="P:B cell differentiation"/>
    <property type="evidence" value="ECO:0000304"/>
    <property type="project" value="ProtInc"/>
</dbReference>
<dbReference type="GO" id="GO:0021987">
    <property type="term" value="P:cerebral cortex development"/>
    <property type="evidence" value="ECO:0007669"/>
    <property type="project" value="Ensembl"/>
</dbReference>
<dbReference type="GO" id="GO:0048701">
    <property type="term" value="P:embryonic cranial skeleton morphogenesis"/>
    <property type="evidence" value="ECO:0007669"/>
    <property type="project" value="Ensembl"/>
</dbReference>
<dbReference type="GO" id="GO:0021670">
    <property type="term" value="P:lateral ventricle development"/>
    <property type="evidence" value="ECO:0007669"/>
    <property type="project" value="Ensembl"/>
</dbReference>
<dbReference type="GO" id="GO:0000122">
    <property type="term" value="P:negative regulation of transcription by RNA polymerase II"/>
    <property type="evidence" value="ECO:0007669"/>
    <property type="project" value="Ensembl"/>
</dbReference>
<dbReference type="GO" id="GO:0007399">
    <property type="term" value="P:nervous system development"/>
    <property type="evidence" value="ECO:0000318"/>
    <property type="project" value="GO_Central"/>
</dbReference>
<dbReference type="GO" id="GO:0006357">
    <property type="term" value="P:regulation of transcription by RNA polymerase II"/>
    <property type="evidence" value="ECO:0000318"/>
    <property type="project" value="GO_Central"/>
</dbReference>
<dbReference type="GO" id="GO:0007423">
    <property type="term" value="P:sensory organ development"/>
    <property type="evidence" value="ECO:0000318"/>
    <property type="project" value="GO_Central"/>
</dbReference>
<dbReference type="GO" id="GO:0035914">
    <property type="term" value="P:skeletal muscle cell differentiation"/>
    <property type="evidence" value="ECO:0007669"/>
    <property type="project" value="Ensembl"/>
</dbReference>
<dbReference type="GO" id="GO:0007283">
    <property type="term" value="P:spermatogenesis"/>
    <property type="evidence" value="ECO:0007669"/>
    <property type="project" value="UniProtKB-KW"/>
</dbReference>
<dbReference type="GO" id="GO:0006366">
    <property type="term" value="P:transcription by RNA polymerase II"/>
    <property type="evidence" value="ECO:0000304"/>
    <property type="project" value="ProtInc"/>
</dbReference>
<dbReference type="CDD" id="cd00131">
    <property type="entry name" value="PAX"/>
    <property type="match status" value="1"/>
</dbReference>
<dbReference type="DisProt" id="DP00969"/>
<dbReference type="FunFam" id="1.10.10.10:FF:000013">
    <property type="entry name" value="Paired box 8 isoform 1"/>
    <property type="match status" value="1"/>
</dbReference>
<dbReference type="FunFam" id="1.10.10.10:FF:000003">
    <property type="entry name" value="Paired box protein Pax-6"/>
    <property type="match status" value="1"/>
</dbReference>
<dbReference type="Gene3D" id="1.10.10.10">
    <property type="entry name" value="Winged helix-like DNA-binding domain superfamily/Winged helix DNA-binding domain"/>
    <property type="match status" value="2"/>
</dbReference>
<dbReference type="IDEAL" id="IID00067"/>
<dbReference type="InterPro" id="IPR009057">
    <property type="entry name" value="Homeodomain-like_sf"/>
</dbReference>
<dbReference type="InterPro" id="IPR043182">
    <property type="entry name" value="PAIRED_DNA-bd_dom"/>
</dbReference>
<dbReference type="InterPro" id="IPR001523">
    <property type="entry name" value="Paired_dom"/>
</dbReference>
<dbReference type="InterPro" id="IPR022130">
    <property type="entry name" value="Pax2_C"/>
</dbReference>
<dbReference type="InterPro" id="IPR043565">
    <property type="entry name" value="PAX_fam"/>
</dbReference>
<dbReference type="InterPro" id="IPR036388">
    <property type="entry name" value="WH-like_DNA-bd_sf"/>
</dbReference>
<dbReference type="PANTHER" id="PTHR45636:SF20">
    <property type="entry name" value="PAIRED BOX PROTEIN PAX-5"/>
    <property type="match status" value="1"/>
</dbReference>
<dbReference type="PANTHER" id="PTHR45636">
    <property type="entry name" value="PAIRED BOX PROTEIN PAX-6-RELATED-RELATED"/>
    <property type="match status" value="1"/>
</dbReference>
<dbReference type="Pfam" id="PF00292">
    <property type="entry name" value="PAX"/>
    <property type="match status" value="1"/>
</dbReference>
<dbReference type="Pfam" id="PF12403">
    <property type="entry name" value="Pax2_C"/>
    <property type="match status" value="1"/>
</dbReference>
<dbReference type="PRINTS" id="PR00027">
    <property type="entry name" value="PAIREDBOX"/>
</dbReference>
<dbReference type="SMART" id="SM00351">
    <property type="entry name" value="PAX"/>
    <property type="match status" value="1"/>
</dbReference>
<dbReference type="SUPFAM" id="SSF46689">
    <property type="entry name" value="Homeodomain-like"/>
    <property type="match status" value="1"/>
</dbReference>
<dbReference type="PROSITE" id="PS00034">
    <property type="entry name" value="PAIRED_1"/>
    <property type="match status" value="1"/>
</dbReference>
<dbReference type="PROSITE" id="PS51057">
    <property type="entry name" value="PAIRED_2"/>
    <property type="match status" value="1"/>
</dbReference>
<feature type="chain" id="PRO_0000050183" description="Paired box protein Pax-5">
    <location>
        <begin position="1"/>
        <end position="391"/>
    </location>
</feature>
<feature type="DNA-binding region" description="Paired" evidence="2">
    <location>
        <begin position="16"/>
        <end position="142"/>
    </location>
</feature>
<feature type="region of interest" description="Disordered" evidence="3">
    <location>
        <begin position="1"/>
        <end position="21"/>
    </location>
</feature>
<feature type="region of interest" description="PAI subdomain" evidence="2">
    <location>
        <begin position="19"/>
        <end position="75"/>
    </location>
</feature>
<feature type="region of interest" description="RED subdomain" evidence="2">
    <location>
        <begin position="94"/>
        <end position="142"/>
    </location>
</feature>
<feature type="region of interest" description="Disordered" evidence="3">
    <location>
        <begin position="182"/>
        <end position="218"/>
    </location>
</feature>
<feature type="site" description="Breakpoint for translocation to form PAX5-ETV6">
    <location>
        <begin position="158"/>
        <end position="159"/>
    </location>
</feature>
<feature type="site" description="Breakpoint for translocation to form PAX5-FOXP1">
    <location>
        <begin position="260"/>
        <end position="261"/>
    </location>
</feature>
<feature type="site" description="Breakpoint for translocation to form PAX5-ZNF521">
    <location>
        <begin position="303"/>
        <end position="304"/>
    </location>
</feature>
<feature type="splice variant" id="VSP_047827" description="In isoform 10." evidence="14">
    <location>
        <begin position="71"/>
        <end position="136"/>
    </location>
</feature>
<feature type="splice variant" id="VSP_047828" description="In isoform 8 and isoform 9." evidence="14">
    <location>
        <begin position="159"/>
        <end position="201"/>
    </location>
</feature>
<feature type="splice variant" id="VSP_044115" description="In isoform 5." evidence="13">
    <original>TTEYSAMASLAGGLDDMKANLASPTPADIGSSVPGPQSYPIVTGRDLASTTLPGYPPHVPPAGQGSYSAPTLTGMVPGSEFSGSPYSHPQYSSYNDSWRFPNPGLLGSPYYYSAAARGAAPPAAATAYDRH</original>
    <variation>AVTWRARPSPGTLHTSPPLDRAATQHRR</variation>
    <location>
        <begin position="261"/>
        <end position="391"/>
    </location>
</feature>
<feature type="splice variant" id="VSP_044116" description="In isoform 4." evidence="13">
    <original>TTEYSAMASLAGGLDDMKANLASPTPADIGSSVPGPQSYPIVTGRDLASTTLPGY</original>
    <variation>APPIIIALPPEE</variation>
    <location>
        <begin position="261"/>
        <end position="315"/>
    </location>
</feature>
<feature type="splice variant" id="VSP_047829" description="In isoform 11." evidence="14">
    <original>TTEYSAMASLAGGLDDMKANLASPTPADIGSSVPGPQSYPIVTGRDL</original>
    <variation>WCPVLMRQYLVQPQAVLFQAVTWRARPSPGTLHTSPPLDRAATQHRR</variation>
    <location>
        <begin position="261"/>
        <end position="307"/>
    </location>
</feature>
<feature type="splice variant" id="VSP_044117" description="In isoform 3." evidence="13">
    <original>TTEYSAMASLAGGLDDMKANLA</original>
    <variation>GVSFPGVPTATLSIPRTTTPGG</variation>
    <location>
        <begin position="261"/>
        <end position="282"/>
    </location>
</feature>
<feature type="splice variant" id="VSP_044118" description="In isoform 3." evidence="13">
    <original>PADIGSSVPGPQSYPIVTGRDLASTTLPGY</original>
    <variation>RGCLAPPIIIALPPEE</variation>
    <location>
        <begin position="286"/>
        <end position="315"/>
    </location>
</feature>
<feature type="splice variant" id="VSP_047830" description="In isoform 7." evidence="14">
    <location>
        <begin position="304"/>
        <end position="366"/>
    </location>
</feature>
<feature type="splice variant" id="VSP_047831" description="In isoform 10." evidence="14">
    <location>
        <begin position="304"/>
        <end position="337"/>
    </location>
</feature>
<feature type="splice variant" id="VSP_044119" description="In isoform 6." evidence="13">
    <original>RDLASTTLPGYPPHVPPAGQGSYSAPTLTGMVPGSEFSGSPYSHP</original>
    <variation>SEFSGSPYSHP</variation>
    <location>
        <begin position="305"/>
        <end position="349"/>
    </location>
</feature>
<feature type="splice variant" id="VSP_047832" description="In isoform 11." evidence="14">
    <location>
        <begin position="308"/>
        <end position="391"/>
    </location>
</feature>
<feature type="splice variant" id="VSP_044120" description="In isoform 3 and isoform 4." evidence="13">
    <original>VPPAGQGSYSAPTLTGMVPGSEFSGSPYSHPQYSSYNDSWRFPNPGLLGSPYYYSAAARGAAPPAAATAYDRH</original>
    <variation>LQPPLPMTVTDPWSQAGTKH</variation>
    <location>
        <begin position="319"/>
        <end position="391"/>
    </location>
</feature>
<feature type="splice variant" id="VSP_044121" description="In isoform 2 and isoform 9." evidence="13 14">
    <location>
        <begin position="338"/>
        <end position="366"/>
    </location>
</feature>
<feature type="sequence variant" id="VAR_070672" description="In dbSNP:rs868494257." evidence="9">
    <original>G</original>
    <variation>R</variation>
    <location>
        <position position="24"/>
    </location>
</feature>
<feature type="sequence variant" id="VAR_070673" description="In dbSNP:rs926053251." evidence="9">
    <original>V</original>
    <variation>G</variation>
    <location>
        <position position="26"/>
    </location>
</feature>
<feature type="sequence variant" id="VAR_070674" description="In dbSNP:rs1839781585." evidence="9">
    <original>P</original>
    <variation>Q</variation>
    <location>
        <position position="34"/>
    </location>
</feature>
<feature type="sequence variant" id="VAR_070675" description="In dbSNP:rs2132503160." evidence="9">
    <original>D</original>
    <variation>V</variation>
    <location>
        <position position="53"/>
    </location>
</feature>
<feature type="sequence variant" id="VAR_070676" evidence="9">
    <original>R</original>
    <variation>G</variation>
    <location>
        <position position="59"/>
    </location>
</feature>
<feature type="sequence variant" id="VAR_070677" description="In dbSNP:rs2132502937." evidence="9">
    <original>S</original>
    <variation>N</variation>
    <location>
        <position position="66"/>
    </location>
</feature>
<feature type="sequence variant" id="VAR_070678" evidence="9">
    <original>T</original>
    <variation>R</variation>
    <location>
        <position position="75"/>
    </location>
</feature>
<feature type="sequence variant" id="VAR_070679" evidence="9">
    <original>P</original>
    <variation>R</variation>
    <location>
        <position position="80"/>
    </location>
</feature>
<feature type="sequence variant" id="VAR_070680" evidence="9">
    <original>I</original>
    <variation>T</variation>
    <location>
        <position position="139"/>
    </location>
</feature>
<feature type="sequence variant" id="VAR_070681" description="In dbSNP:rs115889954." evidence="9">
    <original>V</original>
    <variation>I</variation>
    <location>
        <position position="151"/>
    </location>
</feature>
<feature type="sequence variant" id="VAR_070682" description="In ALL3; confers susceptibility to ALL3; reduced transcription factor activity; dbSNP:rs398123063." evidence="9">
    <original>G</original>
    <variation>S</variation>
    <location>
        <position position="183"/>
    </location>
</feature>
<feature type="sequence variant" id="VAR_070683" description="In dbSNP:rs2132398347." evidence="9">
    <original>G</original>
    <variation>V</variation>
    <location>
        <position position="183"/>
    </location>
</feature>
<feature type="sequence variant" id="VAR_070684" description="In dbSNP:rs137870876." evidence="9">
    <original>S</original>
    <variation>L</variation>
    <location>
        <position position="213"/>
    </location>
</feature>
<feature type="sequence variant" id="VAR_070685" description="In dbSNP:rs372989600." evidence="9">
    <original>I</original>
    <variation>T</variation>
    <location>
        <position position="301"/>
    </location>
</feature>
<feature type="sequence variant" id="VAR_034370" description="In dbSNP:rs34810717.">
    <original>A</original>
    <variation>T</variation>
    <location>
        <position position="322"/>
    </location>
</feature>
<feature type="sequence variant" id="VAR_070686" evidence="9">
    <original>G</original>
    <variation>V</variation>
    <location>
        <position position="338"/>
    </location>
</feature>
<feature type="sequence conflict" description="In Ref. 8; AAC35286." evidence="15" ref="8">
    <original>I</original>
    <variation>F</variation>
    <location>
        <position position="99"/>
    </location>
</feature>
<feature type="sequence conflict" description="In Ref. 8; AAC35286." evidence="15" ref="8">
    <original>TKV</original>
    <variation>PKL</variation>
    <location>
        <begin position="141"/>
        <end position="143"/>
    </location>
</feature>
<feature type="helix" evidence="16">
    <location>
        <begin position="35"/>
        <end position="46"/>
    </location>
</feature>
<feature type="helix" evidence="16">
    <location>
        <begin position="51"/>
        <end position="58"/>
    </location>
</feature>
<feature type="helix" evidence="16">
    <location>
        <begin position="62"/>
        <end position="75"/>
    </location>
</feature>
<feature type="strand" evidence="16">
    <location>
        <begin position="89"/>
        <end position="91"/>
    </location>
</feature>
<feature type="helix" evidence="16">
    <location>
        <begin position="93"/>
        <end position="105"/>
    </location>
</feature>
<feature type="helix" evidence="16">
    <location>
        <begin position="111"/>
        <end position="120"/>
    </location>
</feature>
<feature type="turn" evidence="16">
    <location>
        <begin position="126"/>
        <end position="128"/>
    </location>
</feature>
<feature type="helix" evidence="16">
    <location>
        <begin position="132"/>
        <end position="140"/>
    </location>
</feature>
<sequence length="391" mass="42149">MDLEKNYPTPRTSRTGHGGVNQLGGVFVNGRPLPDVVRQRIVELAHQGVRPCDISRQLRVSHGCVSKILGRYYETGSIKPGVIGGSKPKVATPKVVEKIAEYKRQNPTMFAWEIRDRLLAERVCDNDTVPSVSSINRIIRTKVQQPPNQPVPASSHSIVSTGSVTQVSSVSTDSAGSSYSISGILGITSPSADTNKRKRDEGIQESPVPNGHSLPGRDFLRKQMRGDLFTQQQLEVLDRVFERQHYSDIFTTTEPIKPEQTTEYSAMASLAGGLDDMKANLASPTPADIGSSVPGPQSYPIVTGRDLASTTLPGYPPHVPPAGQGSYSAPTLTGMVPGSEFSGSPYSHPQYSSYNDSWRFPNPGLLGSPYYYSAAARGAAPPAAATAYDRH</sequence>
<comment type="function">
    <text evidence="5 10 12">Transcription factor that plays an essential role in commitment of lymphoid progenitors to the B-lymphocyte lineage (PubMed:10811620, PubMed:27181361). Fulfills a dual role by repressing B-lineage inappropriate genes and simultaneously activating B-lineage-specific genes (PubMed:10811620, PubMed:27181361). In turn, regulates cell adhesion and migration, induces V(H)-to-D(H)J(H) recombination, facilitates pre-B-cell receptor signaling and promotes development to the mature B-cell stage (PubMed:32612238). Repression of the cohesin-release factor WAPL causes global changes of the chromosomal architecture in pro-B cells to facilitate the generation of a diverse antibody repertoire (PubMed:32612238).</text>
</comment>
<comment type="function">
    <text evidence="8 11">(Microbial infection) Plays an essential role in the maintenance of Epstein-Barr virus genome copy number within the host cell by promoting EBNA1/oriP-dependent binding and transcription (PubMed:31941781). Also participates in the inhibition of lytic EBV reactivation by modulating viral BZLF1 activity (PubMed:23678172).</text>
</comment>
<comment type="subunit">
    <text evidence="1 4 5 6">Interacts with ETS1; this interaction alters PAX5 DNA-binding properties (PubMed:11779502). Binds DNA as a monomer (PubMed:11779502). Interacts with TBP; this interaction allows PAX5 to interact with the basal transcription machinery (PubMed:10197586). Interacts with RB1 (PubMed:10197586). Interacts with TLE4 (PubMed:10811620). Interacts with DAXX (By similarity).</text>
</comment>
<comment type="subunit">
    <text evidence="8 11">(Microbial infection) Interacts (via N-terminus) with Epstein-Barr virus protein BZLF1 (via C-terminus); this interaction inhibits BZLF1-mediated lytic viral reactivation (PubMed:23678172). Interacts also with EBNA1; this interaction promotes EBNA1-dependent transcription (PubMed:31941781).</text>
</comment>
<comment type="interaction">
    <interactant intactId="EBI-296331">
        <id>Q02548</id>
    </interactant>
    <interactant intactId="EBI-11954993">
        <id>Q8WYK0</id>
        <label>ACOT12</label>
    </interactant>
    <organismsDiffer>false</organismsDiffer>
    <experiments>3</experiments>
</comment>
<comment type="interaction">
    <interactant intactId="EBI-296331">
        <id>Q02548</id>
    </interactant>
    <interactant intactId="EBI-8643161">
        <id>Q9NX04</id>
        <label>AIRIM</label>
    </interactant>
    <organismsDiffer>false</organismsDiffer>
    <experiments>3</experiments>
</comment>
<comment type="interaction">
    <interactant intactId="EBI-296331">
        <id>Q02548</id>
    </interactant>
    <interactant intactId="EBI-1050106">
        <id>O75934</id>
        <label>BCAS2</label>
    </interactant>
    <organismsDiffer>false</organismsDiffer>
    <experiments>3</experiments>
</comment>
<comment type="interaction">
    <interactant intactId="EBI-296331">
        <id>Q02548</id>
    </interactant>
    <interactant intactId="EBI-395261">
        <id>P24863</id>
        <label>CCNC</label>
    </interactant>
    <organismsDiffer>false</organismsDiffer>
    <experiments>3</experiments>
</comment>
<comment type="interaction">
    <interactant intactId="EBI-296331">
        <id>Q02548</id>
    </interactant>
    <interactant intactId="EBI-1245761">
        <id>Q00526</id>
        <label>CDK3</label>
    </interactant>
    <organismsDiffer>false</organismsDiffer>
    <experiments>3</experiments>
</comment>
<comment type="interaction">
    <interactant intactId="EBI-296331">
        <id>Q02548</id>
    </interactant>
    <interactant intactId="EBI-10292696">
        <id>Q96Q77</id>
        <label>CIB3</label>
    </interactant>
    <organismsDiffer>false</organismsDiffer>
    <experiments>3</experiments>
</comment>
<comment type="interaction">
    <interactant intactId="EBI-296331">
        <id>Q02548</id>
    </interactant>
    <interactant intactId="EBI-456371">
        <id>P61024</id>
        <label>CKS1B</label>
    </interactant>
    <organismsDiffer>false</organismsDiffer>
    <experiments>3</experiments>
</comment>
<comment type="interaction">
    <interactant intactId="EBI-296331">
        <id>Q02548</id>
    </interactant>
    <interactant intactId="EBI-347804">
        <id>P68400</id>
        <label>CSNK2A1</label>
    </interactant>
    <organismsDiffer>false</organismsDiffer>
    <experiments>3</experiments>
</comment>
<comment type="interaction">
    <interactant intactId="EBI-296331">
        <id>Q02548</id>
    </interactant>
    <interactant intactId="EBI-12024320">
        <id>Q8TB03</id>
        <label>CXorf38</label>
    </interactant>
    <organismsDiffer>false</organismsDiffer>
    <experiments>3</experiments>
</comment>
<comment type="interaction">
    <interactant intactId="EBI-296331">
        <id>Q02548</id>
    </interactant>
    <interactant intactId="EBI-740376">
        <id>Q86UW9</id>
        <label>DTX2</label>
    </interactant>
    <organismsDiffer>false</organismsDiffer>
    <experiments>3</experiments>
</comment>
<comment type="interaction">
    <interactant intactId="EBI-296331">
        <id>Q02548</id>
    </interactant>
    <interactant intactId="EBI-11956479">
        <id>P23142-4</id>
        <label>FBLN1</label>
    </interactant>
    <organismsDiffer>false</organismsDiffer>
    <experiments>3</experiments>
</comment>
<comment type="interaction">
    <interactant intactId="EBI-296331">
        <id>Q02548</id>
    </interactant>
    <interactant intactId="EBI-11427343">
        <id>Q9P2W3</id>
        <label>GNG13</label>
    </interactant>
    <organismsDiffer>false</organismsDiffer>
    <experiments>3</experiments>
</comment>
<comment type="interaction">
    <interactant intactId="EBI-296331">
        <id>Q02548</id>
    </interactant>
    <interactant intactId="EBI-10219092">
        <id>Q6ISB3</id>
        <label>GRHL2</label>
    </interactant>
    <organismsDiffer>false</organismsDiffer>
    <experiments>3</experiments>
</comment>
<comment type="interaction">
    <interactant intactId="EBI-296331">
        <id>Q02548</id>
    </interactant>
    <interactant intactId="EBI-740220">
        <id>O14964</id>
        <label>HGS</label>
    </interactant>
    <organismsDiffer>false</organismsDiffer>
    <experiments>3</experiments>
</comment>
<comment type="interaction">
    <interactant intactId="EBI-296331">
        <id>Q02548</id>
    </interactant>
    <interactant intactId="EBI-2549423">
        <id>Q6NT76</id>
        <label>HMBOX1</label>
    </interactant>
    <organismsDiffer>false</organismsDiffer>
    <experiments>3</experiments>
</comment>
<comment type="interaction">
    <interactant intactId="EBI-296331">
        <id>Q02548</id>
    </interactant>
    <interactant intactId="EBI-2214136">
        <id>O15347</id>
        <label>HMGB3</label>
    </interactant>
    <organismsDiffer>false</organismsDiffer>
    <experiments>3</experiments>
</comment>
<comment type="interaction">
    <interactant intactId="EBI-296331">
        <id>Q02548</id>
    </interactant>
    <interactant intactId="EBI-1752118">
        <id>P31273</id>
        <label>HOXC8</label>
    </interactant>
    <organismsDiffer>false</organismsDiffer>
    <experiments>3</experiments>
</comment>
<comment type="interaction">
    <interactant intactId="EBI-296331">
        <id>Q02548</id>
    </interactant>
    <interactant intactId="EBI-6426443">
        <id>Q2WGJ6</id>
        <label>KLHL38</label>
    </interactant>
    <organismsDiffer>false</organismsDiffer>
    <experiments>3</experiments>
</comment>
<comment type="interaction">
    <interactant intactId="EBI-296331">
        <id>Q02548</id>
    </interactant>
    <interactant intactId="EBI-2610266">
        <id>PRO_0000390949</id>
        <label>KMT2A</label>
        <dbReference type="UniProtKB" id="Q03164"/>
    </interactant>
    <organismsDiffer>false</organismsDiffer>
    <experiments>2</experiments>
</comment>
<comment type="interaction">
    <interactant intactId="EBI-296331">
        <id>Q02548</id>
    </interactant>
    <interactant intactId="EBI-10171774">
        <id>P60410</id>
        <label>KRTAP10-8</label>
    </interactant>
    <organismsDiffer>false</organismsDiffer>
    <experiments>3</experiments>
</comment>
<comment type="interaction">
    <interactant intactId="EBI-296331">
        <id>Q02548</id>
    </interactant>
    <interactant intactId="EBI-1043191">
        <id>Q9BYQ3</id>
        <label>KRTAP9-3</label>
    </interactant>
    <organismsDiffer>false</organismsDiffer>
    <experiments>3</experiments>
</comment>
<comment type="interaction">
    <interactant intactId="EBI-296331">
        <id>Q02548</id>
    </interactant>
    <interactant intactId="EBI-12079790">
        <id>Q6P4E2</id>
        <label>LARP4</label>
    </interactant>
    <organismsDiffer>false</organismsDiffer>
    <experiments>3</experiments>
</comment>
<comment type="interaction">
    <interactant intactId="EBI-296331">
        <id>Q02548</id>
    </interactant>
    <interactant intactId="EBI-747813">
        <id>Q5SW96</id>
        <label>LDLRAP1</label>
    </interactant>
    <organismsDiffer>false</organismsDiffer>
    <experiments>3</experiments>
</comment>
<comment type="interaction">
    <interactant intactId="EBI-296331">
        <id>Q02548</id>
    </interactant>
    <interactant intactId="EBI-2341787">
        <id>Q17RB8</id>
        <label>LONRF1</label>
    </interactant>
    <organismsDiffer>false</organismsDiffer>
    <experiments>3</experiments>
</comment>
<comment type="interaction">
    <interactant intactId="EBI-296331">
        <id>Q02548</id>
    </interactant>
    <interactant intactId="EBI-713568">
        <id>P45984</id>
        <label>MAPK9</label>
    </interactant>
    <organismsDiffer>false</organismsDiffer>
    <experiments>3</experiments>
</comment>
<comment type="interaction">
    <interactant intactId="EBI-296331">
        <id>Q02548</id>
    </interactant>
    <interactant intactId="EBI-10281234">
        <id>Q969S2</id>
        <label>NEIL2</label>
    </interactant>
    <organismsDiffer>false</organismsDiffer>
    <experiments>3</experiments>
</comment>
<comment type="interaction">
    <interactant intactId="EBI-296331">
        <id>Q02548</id>
    </interactant>
    <interactant intactId="EBI-11956831">
        <id>Q13952-2</id>
        <label>NFYC</label>
    </interactant>
    <organismsDiffer>false</organismsDiffer>
    <experiments>3</experiments>
</comment>
<comment type="interaction">
    <interactant intactId="EBI-296331">
        <id>Q02548</id>
    </interactant>
    <interactant intactId="EBI-6165879">
        <id>Q96IV0</id>
        <label>NGLY1</label>
    </interactant>
    <organismsDiffer>false</organismsDiffer>
    <experiments>3</experiments>
</comment>
<comment type="interaction">
    <interactant intactId="EBI-296331">
        <id>Q02548</id>
    </interactant>
    <interactant intactId="EBI-9057006">
        <id>Q9UJX0</id>
        <label>OSGIN1</label>
    </interactant>
    <organismsDiffer>false</organismsDiffer>
    <experiments>3</experiments>
</comment>
<comment type="interaction">
    <interactant intactId="EBI-296331">
        <id>Q02548</id>
    </interactant>
    <interactant intactId="EBI-10171633">
        <id>Q96PV4</id>
        <label>PNMA5</label>
    </interactant>
    <organismsDiffer>false</organismsDiffer>
    <experiments>3</experiments>
</comment>
<comment type="interaction">
    <interactant intactId="EBI-296331">
        <id>Q02548</id>
    </interactant>
    <interactant intactId="EBI-706448">
        <id>P43351</id>
        <label>RAD52</label>
    </interactant>
    <organismsDiffer>false</organismsDiffer>
    <experiments>3</experiments>
</comment>
<comment type="interaction">
    <interactant intactId="EBI-296331">
        <id>Q02548</id>
    </interactant>
    <interactant intactId="EBI-743154">
        <id>Q9UBE0</id>
        <label>SAE1</label>
    </interactant>
    <organismsDiffer>false</organismsDiffer>
    <experiments>3</experiments>
</comment>
<comment type="interaction">
    <interactant intactId="EBI-296331">
        <id>Q02548</id>
    </interactant>
    <interactant intactId="EBI-10320311">
        <id>Q9UDX3</id>
        <label>SEC14L4</label>
    </interactant>
    <organismsDiffer>false</organismsDiffer>
    <experiments>3</experiments>
</comment>
<comment type="interaction">
    <interactant intactId="EBI-296331">
        <id>Q02548</id>
    </interactant>
    <interactant intactId="EBI-2652799">
        <id>Q99469</id>
        <label>STAC</label>
    </interactant>
    <organismsDiffer>false</organismsDiffer>
    <experiments>3</experiments>
</comment>
<comment type="interaction">
    <interactant intactId="EBI-296331">
        <id>Q02548</id>
    </interactant>
    <interactant intactId="EBI-1047967">
        <id>Q86UE8</id>
        <label>TLK2</label>
    </interactant>
    <organismsDiffer>false</organismsDiffer>
    <experiments>3</experiments>
</comment>
<comment type="interaction">
    <interactant intactId="EBI-296331">
        <id>Q02548</id>
    </interactant>
    <interactant intactId="EBI-10180829">
        <id>Q7KZS0</id>
        <label>UBE2I</label>
    </interactant>
    <organismsDiffer>false</organismsDiffer>
    <experiments>3</experiments>
</comment>
<comment type="interaction">
    <interactant intactId="EBI-296331">
        <id>Q02548</id>
    </interactant>
    <interactant intactId="EBI-1993619">
        <id>Q14CS0</id>
        <label>UBXN2B</label>
    </interactant>
    <organismsDiffer>false</organismsDiffer>
    <experiments>3</experiments>
</comment>
<comment type="interaction">
    <interactant intactId="EBI-296331">
        <id>Q02548</id>
    </interactant>
    <interactant intactId="EBI-1993627">
        <id>O94888</id>
        <label>UBXN7</label>
    </interactant>
    <organismsDiffer>false</organismsDiffer>
    <experiments>3</experiments>
</comment>
<comment type="interaction">
    <interactant intactId="EBI-296331">
        <id>Q02548</id>
    </interactant>
    <interactant intactId="EBI-17634549">
        <id>Q9UJ78-2</id>
        <label>ZMYM5</label>
    </interactant>
    <organismsDiffer>false</organismsDiffer>
    <experiments>3</experiments>
</comment>
<comment type="subcellular location">
    <subcellularLocation>
        <location evidence="11">Nucleus</location>
    </subcellularLocation>
</comment>
<comment type="alternative products">
    <event type="alternative splicing"/>
    <isoform>
        <id>Q02548-1</id>
        <name>1</name>
        <sequence type="displayed"/>
    </isoform>
    <isoform>
        <id>Q02548-2</id>
        <name>2</name>
        <name>delta9</name>
        <sequence type="described" ref="VSP_044121"/>
    </isoform>
    <isoform>
        <id>Q02548-3</id>
        <name>3</name>
        <name>delta78</name>
        <sequence type="described" ref="VSP_044117 VSP_044118 VSP_044120"/>
    </isoform>
    <isoform>
        <id>Q02548-4</id>
        <name>4</name>
        <name>delta789</name>
        <sequence type="described" ref="VSP_044116 VSP_044120"/>
    </isoform>
    <isoform>
        <id>Q02548-5</id>
        <name>5</name>
        <name>delta8</name>
        <sequence type="described" ref="VSP_044115"/>
    </isoform>
    <isoform>
        <id>Q02548-6</id>
        <name>6</name>
        <name>delta7</name>
        <sequence type="described" ref="VSP_044119"/>
    </isoform>
    <isoform>
        <id>Q02548-7</id>
        <name>7</name>
        <sequence type="described" ref="VSP_047830"/>
    </isoform>
    <isoform>
        <id>Q02548-8</id>
        <name>8</name>
        <sequence type="described" ref="VSP_047828"/>
    </isoform>
    <isoform>
        <id>Q02548-9</id>
        <name>9</name>
        <sequence type="described" ref="VSP_047828 VSP_044121"/>
    </isoform>
    <isoform>
        <id>Q02548-10</id>
        <name>10</name>
        <sequence type="described" ref="VSP_047827 VSP_047831"/>
    </isoform>
    <isoform>
        <id>Q02548-11</id>
        <name>11</name>
        <sequence type="described" ref="VSP_047829 VSP_047832"/>
    </isoform>
</comment>
<comment type="developmental stage">
    <text>Expressed at early B-cell differentiation, in the developing CNS and in adult testis.</text>
</comment>
<comment type="PTM">
    <text evidence="15">O-glycosylated.</text>
</comment>
<comment type="PTM">
    <text evidence="10">Phosphorylated by SYK. This phosphorylation plays an important role in the abolition of BLIMP1 repression by PAX5 in order to trigger plasma cell differentiation.</text>
</comment>
<comment type="disease">
    <text evidence="7">A chromosomal aberration involving PAX5 is a cause of acute lymphoblastic leukemia. Translocation t(9;18)(p13;q11.2) with ZNF521. Translocation t(9;3)(p13;p14.1) with FOXP1. Translocation t(9;12)(p13;p13) with ETV6.</text>
</comment>
<comment type="disease" evidence="9">
    <disease id="DI-03959">
        <name>Leukemia, acute lymphoblastic, 3</name>
        <acronym>ALL3</acronym>
        <description>A subtype of acute leukemia, a cancer of the white blood cells. Acute lymphoblastic anemia is a malignant disease of bone marrow and the most common malignancy diagnosed in children. The malignant cells are lymphoid precursor cells (lymphoblasts) that are arrested in an early stage of development. The lymphoblasts replace the normal marrow elements, resulting in a marked decrease in the production of normal blood cells. Consequently, anemia, thrombocytopenia, and neutropenia occur to varying degrees. The lymphoblasts also proliferate in organs other than the marrow, particularly the liver, spleen, and lymphnodes.</description>
        <dbReference type="MIM" id="613065"/>
    </disease>
    <text>Disease susceptibility is associated with variants affecting the gene represented in this entry.</text>
</comment>
<comment type="online information" name="Atlas of Genetics and Cytogenetics in Oncology and Haematology">
    <link uri="https://atlasgeneticsoncology.org/gene/62/PAX5"/>
</comment>
<gene>
    <name type="primary">PAX5</name>
</gene>
<organism>
    <name type="scientific">Homo sapiens</name>
    <name type="common">Human</name>
    <dbReference type="NCBI Taxonomy" id="9606"/>
    <lineage>
        <taxon>Eukaryota</taxon>
        <taxon>Metazoa</taxon>
        <taxon>Chordata</taxon>
        <taxon>Craniata</taxon>
        <taxon>Vertebrata</taxon>
        <taxon>Euteleostomi</taxon>
        <taxon>Mammalia</taxon>
        <taxon>Eutheria</taxon>
        <taxon>Euarchontoglires</taxon>
        <taxon>Primates</taxon>
        <taxon>Haplorrhini</taxon>
        <taxon>Catarrhini</taxon>
        <taxon>Hominidae</taxon>
        <taxon>Homo</taxon>
    </lineage>
</organism>
<evidence type="ECO:0000250" key="1">
    <source>
        <dbReference type="UniProtKB" id="Q02650"/>
    </source>
</evidence>
<evidence type="ECO:0000255" key="2">
    <source>
        <dbReference type="PROSITE-ProRule" id="PRU00381"/>
    </source>
</evidence>
<evidence type="ECO:0000256" key="3">
    <source>
        <dbReference type="SAM" id="MobiDB-lite"/>
    </source>
</evidence>
<evidence type="ECO:0000269" key="4">
    <source>
    </source>
</evidence>
<evidence type="ECO:0000269" key="5">
    <source>
    </source>
</evidence>
<evidence type="ECO:0000269" key="6">
    <source>
    </source>
</evidence>
<evidence type="ECO:0000269" key="7">
    <source>
    </source>
</evidence>
<evidence type="ECO:0000269" key="8">
    <source>
    </source>
</evidence>
<evidence type="ECO:0000269" key="9">
    <source>
    </source>
</evidence>
<evidence type="ECO:0000269" key="10">
    <source>
    </source>
</evidence>
<evidence type="ECO:0000269" key="11">
    <source>
    </source>
</evidence>
<evidence type="ECO:0000269" key="12">
    <source>
    </source>
</evidence>
<evidence type="ECO:0000303" key="13">
    <source>
    </source>
</evidence>
<evidence type="ECO:0000303" key="14">
    <source>
    </source>
</evidence>
<evidence type="ECO:0000305" key="15"/>
<evidence type="ECO:0007829" key="16">
    <source>
        <dbReference type="PDB" id="1K78"/>
    </source>
</evidence>